<protein>
    <recommendedName>
        <fullName>Alcohol dehydrogenase 1</fullName>
        <ecNumber>1.1.1.1</ecNumber>
    </recommendedName>
</protein>
<proteinExistence type="inferred from homology"/>
<dbReference type="EC" id="1.1.1.1"/>
<dbReference type="EMBL" id="X03048">
    <property type="protein sequence ID" value="CAA26857.1"/>
    <property type="molecule type" value="Genomic_DNA"/>
</dbReference>
<dbReference type="PIR" id="B24268">
    <property type="entry name" value="B24268"/>
</dbReference>
<dbReference type="SMR" id="P07161"/>
<dbReference type="FlyBase" id="FBgn0012581">
    <property type="gene designation" value="Dmul\Adh1"/>
</dbReference>
<dbReference type="GO" id="GO:0005737">
    <property type="term" value="C:cytoplasm"/>
    <property type="evidence" value="ECO:0007669"/>
    <property type="project" value="TreeGrafter"/>
</dbReference>
<dbReference type="GO" id="GO:0004022">
    <property type="term" value="F:alcohol dehydrogenase (NAD+) activity"/>
    <property type="evidence" value="ECO:0007669"/>
    <property type="project" value="UniProtKB-EC"/>
</dbReference>
<dbReference type="GO" id="GO:0006066">
    <property type="term" value="P:alcohol metabolic process"/>
    <property type="evidence" value="ECO:0007669"/>
    <property type="project" value="InterPro"/>
</dbReference>
<dbReference type="CDD" id="cd05323">
    <property type="entry name" value="ADH_SDR_c_like"/>
    <property type="match status" value="1"/>
</dbReference>
<dbReference type="FunFam" id="3.40.50.720:FF:000302">
    <property type="entry name" value="Alcohol dehydrogenase"/>
    <property type="match status" value="1"/>
</dbReference>
<dbReference type="Gene3D" id="3.40.50.720">
    <property type="entry name" value="NAD(P)-binding Rossmann-like Domain"/>
    <property type="match status" value="1"/>
</dbReference>
<dbReference type="InterPro" id="IPR002425">
    <property type="entry name" value="ADH_Drosophila-type"/>
</dbReference>
<dbReference type="InterPro" id="IPR036291">
    <property type="entry name" value="NAD(P)-bd_dom_sf"/>
</dbReference>
<dbReference type="InterPro" id="IPR002347">
    <property type="entry name" value="SDR_fam"/>
</dbReference>
<dbReference type="PANTHER" id="PTHR44229">
    <property type="entry name" value="15-HYDROXYPROSTAGLANDIN DEHYDROGENASE [NAD(+)]"/>
    <property type="match status" value="1"/>
</dbReference>
<dbReference type="PANTHER" id="PTHR44229:SF8">
    <property type="entry name" value="ALCOHOL DEHYDROGENASE-RELATED"/>
    <property type="match status" value="1"/>
</dbReference>
<dbReference type="Pfam" id="PF00106">
    <property type="entry name" value="adh_short"/>
    <property type="match status" value="1"/>
</dbReference>
<dbReference type="PRINTS" id="PR01168">
    <property type="entry name" value="ALCDHDRGNASE"/>
</dbReference>
<dbReference type="PRINTS" id="PR01167">
    <property type="entry name" value="INSADHFAMILY"/>
</dbReference>
<dbReference type="PRINTS" id="PR00080">
    <property type="entry name" value="SDRFAMILY"/>
</dbReference>
<dbReference type="SUPFAM" id="SSF51735">
    <property type="entry name" value="NAD(P)-binding Rossmann-fold domains"/>
    <property type="match status" value="1"/>
</dbReference>
<feature type="initiator methionine" description="Removed">
    <location>
        <position position="1"/>
    </location>
</feature>
<feature type="chain" id="PRO_0000054481" description="Alcohol dehydrogenase 1">
    <location>
        <begin position="2"/>
        <end position="254"/>
    </location>
</feature>
<feature type="active site" description="Proton acceptor" evidence="1">
    <location>
        <position position="151"/>
    </location>
</feature>
<feature type="binding site" evidence="1">
    <location>
        <begin position="10"/>
        <end position="33"/>
    </location>
    <ligand>
        <name>NAD(+)</name>
        <dbReference type="ChEBI" id="CHEBI:57540"/>
    </ligand>
</feature>
<feature type="binding site" evidence="1">
    <location>
        <position position="138"/>
    </location>
    <ligand>
        <name>substrate</name>
    </ligand>
</feature>
<accession>P07161</accession>
<sequence length="254" mass="27495">MAIANKNIIFVAGLGGIGFDTSREIVKSGPKNLVILDRIENPAAIAELKALNPNVTVTFYPYDVTVPVAETTKLLQKIFDQLKTVDLLINGAGILDDYQIERTIAVNFTGTVNTTTAIMSFWDKRKGGPGGVIANICSVTGFNAIYQVPVYSASKAAALSSTNSLAKLAPITGVTAYSINPGITKTPLVHKFNSWLDVEPRVAELLLEHPTQTSLQCAQNFVKAIEANQNGAIWKLDLGTLEAIEWTKHWDSHI</sequence>
<evidence type="ECO:0000250" key="1"/>
<evidence type="ECO:0000305" key="2"/>
<reference key="1">
    <citation type="journal article" date="1985" name="Nucleic Acids Res.">
        <title>Structure and transcription of the Drosophila mulleri alcohol dehydrogenase genes.</title>
        <authorList>
            <person name="Fischer J.A."/>
            <person name="Maniatis T."/>
        </authorList>
    </citation>
    <scope>NUCLEOTIDE SEQUENCE [GENOMIC DNA]</scope>
</reference>
<gene>
    <name type="primary">Adh1</name>
</gene>
<keyword id="KW-0520">NAD</keyword>
<keyword id="KW-0560">Oxidoreductase</keyword>
<comment type="catalytic activity">
    <reaction>
        <text>a primary alcohol + NAD(+) = an aldehyde + NADH + H(+)</text>
        <dbReference type="Rhea" id="RHEA:10736"/>
        <dbReference type="ChEBI" id="CHEBI:15378"/>
        <dbReference type="ChEBI" id="CHEBI:15734"/>
        <dbReference type="ChEBI" id="CHEBI:17478"/>
        <dbReference type="ChEBI" id="CHEBI:57540"/>
        <dbReference type="ChEBI" id="CHEBI:57945"/>
        <dbReference type="EC" id="1.1.1.1"/>
    </reaction>
</comment>
<comment type="catalytic activity">
    <reaction>
        <text>a secondary alcohol + NAD(+) = a ketone + NADH + H(+)</text>
        <dbReference type="Rhea" id="RHEA:10740"/>
        <dbReference type="ChEBI" id="CHEBI:15378"/>
        <dbReference type="ChEBI" id="CHEBI:17087"/>
        <dbReference type="ChEBI" id="CHEBI:35681"/>
        <dbReference type="ChEBI" id="CHEBI:57540"/>
        <dbReference type="ChEBI" id="CHEBI:57945"/>
        <dbReference type="EC" id="1.1.1.1"/>
    </reaction>
</comment>
<comment type="subunit">
    <text>Homodimer.</text>
</comment>
<comment type="similarity">
    <text evidence="2">Belongs to the short-chain dehydrogenases/reductases (SDR) family.</text>
</comment>
<name>ADH1_DROMU</name>
<organism>
    <name type="scientific">Drosophila mulleri</name>
    <name type="common">Fruit fly</name>
    <dbReference type="NCBI Taxonomy" id="7231"/>
    <lineage>
        <taxon>Eukaryota</taxon>
        <taxon>Metazoa</taxon>
        <taxon>Ecdysozoa</taxon>
        <taxon>Arthropoda</taxon>
        <taxon>Hexapoda</taxon>
        <taxon>Insecta</taxon>
        <taxon>Pterygota</taxon>
        <taxon>Neoptera</taxon>
        <taxon>Endopterygota</taxon>
        <taxon>Diptera</taxon>
        <taxon>Brachycera</taxon>
        <taxon>Muscomorpha</taxon>
        <taxon>Ephydroidea</taxon>
        <taxon>Drosophilidae</taxon>
        <taxon>Drosophila</taxon>
    </lineage>
</organism>